<protein>
    <recommendedName>
        <fullName>Carboxylesterase 5A</fullName>
        <ecNumber>3.1.1.1</ecNumber>
    </recommendedName>
    <alternativeName>
        <fullName>Carboxylesterase-like urinary excreted protein homolog</fullName>
        <shortName>Cauxin</shortName>
    </alternativeName>
</protein>
<sequence length="575" mass="64167">MSGDWVRPGQALIWVIWIFGAIIEGSVTEEPHRYTKLGWVQGKQATVLGRLEPVNVFLGIPFAAPPLGPLRFSKPQPPIPWDNLREATAYPNLCFQNLEWLFIYQNLLKVSYPILGMSEDCLYLNIYAPCHANNGSSLPVMVWIPGGGFETGSASIFDGSALAVYEDVLVVTIQYRLGIFGFFTTQNQHAPGNWAFWDQLAALLWVRENIKYFGGNPDSVTIFGNSAGAISISSLILSPLSADLFHRAIMQSGVAIIPSLKSSDNDLKHDLQVVANVCDCNVSDSKALLKCLREKSSLELMSLSQKAKSFTRVVDGSFFSEEPLELLSQKTLKIVPSIIGVNNQECGYILPVRDTPEILLGSNESTALTLIHTLLHIPTQHLYIVTKEYFHGKHSPTDIRDTLLDLFGDVFFVVPGLVTARYHRDSGGPVYFYEFQHRPHCFQNSRPAFVKADHTDEIRFVFGGPFLKGDVVMFEEATEEEKLLSRKMMKYWANFARSGDPNGADLPPWPVYDENEQYLELDVNISTGRRLKDQRVEFWTDTLPLILSASKALLSPTFSLILLSLLSPVLLSAAS</sequence>
<evidence type="ECO:0000250" key="1"/>
<evidence type="ECO:0000255" key="2"/>
<evidence type="ECO:0000255" key="3">
    <source>
        <dbReference type="PROSITE-ProRule" id="PRU10039"/>
    </source>
</evidence>
<evidence type="ECO:0000305" key="4"/>
<organism>
    <name type="scientific">Mus musculus</name>
    <name type="common">Mouse</name>
    <dbReference type="NCBI Taxonomy" id="10090"/>
    <lineage>
        <taxon>Eukaryota</taxon>
        <taxon>Metazoa</taxon>
        <taxon>Chordata</taxon>
        <taxon>Craniata</taxon>
        <taxon>Vertebrata</taxon>
        <taxon>Euteleostomi</taxon>
        <taxon>Mammalia</taxon>
        <taxon>Eutheria</taxon>
        <taxon>Euarchontoglires</taxon>
        <taxon>Glires</taxon>
        <taxon>Rodentia</taxon>
        <taxon>Myomorpha</taxon>
        <taxon>Muroidea</taxon>
        <taxon>Muridae</taxon>
        <taxon>Murinae</taxon>
        <taxon>Mus</taxon>
        <taxon>Mus</taxon>
    </lineage>
</organism>
<gene>
    <name type="primary">Ces5a</name>
    <name type="synonym">Ces7</name>
</gene>
<reference key="1">
    <citation type="journal article" date="2006" name="Comp. Biochem. Physiol.">
        <title>Species-, sex-, and age-dependent urinary excretion of cauxin, a mammalian carboxylesterase.</title>
        <authorList>
            <person name="Miyazaki M."/>
            <person name="Yamashita T."/>
            <person name="Hosokawa M."/>
            <person name="Taira H."/>
            <person name="Suzuki A."/>
        </authorList>
    </citation>
    <scope>NUCLEOTIDE SEQUENCE [MRNA]</scope>
</reference>
<proteinExistence type="evidence at transcript level"/>
<accession>Q6AW46</accession>
<name>EST5A_MOUSE</name>
<dbReference type="EC" id="3.1.1.1"/>
<dbReference type="EMBL" id="AB186393">
    <property type="protein sequence ID" value="BAD35016.1"/>
    <property type="molecule type" value="mRNA"/>
</dbReference>
<dbReference type="CCDS" id="CCDS85584.1"/>
<dbReference type="RefSeq" id="NP_001003951.1">
    <property type="nucleotide sequence ID" value="NM_001003951.3"/>
</dbReference>
<dbReference type="SMR" id="Q6AW46"/>
<dbReference type="FunCoup" id="Q6AW46">
    <property type="interactions" value="20"/>
</dbReference>
<dbReference type="STRING" id="10090.ENSMUSP00000148481"/>
<dbReference type="ESTHER" id="mouse-cauxin">
    <property type="family name" value="Carb_B_Chordata"/>
</dbReference>
<dbReference type="GlyCosmos" id="Q6AW46">
    <property type="glycosylation" value="4 sites, No reported glycans"/>
</dbReference>
<dbReference type="GlyGen" id="Q6AW46">
    <property type="glycosylation" value="4 sites"/>
</dbReference>
<dbReference type="PhosphoSitePlus" id="Q6AW46"/>
<dbReference type="jPOST" id="Q6AW46"/>
<dbReference type="PaxDb" id="10090-ENSMUSP00000076988"/>
<dbReference type="PeptideAtlas" id="Q6AW46"/>
<dbReference type="ProteomicsDB" id="275691"/>
<dbReference type="Antibodypedia" id="28532">
    <property type="antibodies" value="116 antibodies from 21 providers"/>
</dbReference>
<dbReference type="Ensembl" id="ENSMUST00000212009.2">
    <property type="protein sequence ID" value="ENSMUSP00000148481.2"/>
    <property type="gene ID" value="ENSMUSG00000058019.15"/>
</dbReference>
<dbReference type="GeneID" id="67935"/>
<dbReference type="KEGG" id="mmu:67935"/>
<dbReference type="UCSC" id="uc033jgu.1">
    <property type="organism name" value="mouse"/>
</dbReference>
<dbReference type="AGR" id="MGI:1915185"/>
<dbReference type="CTD" id="221223"/>
<dbReference type="MGI" id="MGI:1915185">
    <property type="gene designation" value="Ces5a"/>
</dbReference>
<dbReference type="VEuPathDB" id="HostDB:ENSMUSG00000058019"/>
<dbReference type="eggNOG" id="KOG1516">
    <property type="taxonomic scope" value="Eukaryota"/>
</dbReference>
<dbReference type="GeneTree" id="ENSGT00940000161596"/>
<dbReference type="HOGENOM" id="CLU_006586_13_0_1"/>
<dbReference type="InParanoid" id="Q6AW46"/>
<dbReference type="OMA" id="HWIQQSP"/>
<dbReference type="OrthoDB" id="3200163at2759"/>
<dbReference type="PhylomeDB" id="Q6AW46"/>
<dbReference type="TreeFam" id="TF315470"/>
<dbReference type="BioGRID-ORCS" id="67935">
    <property type="hits" value="3 hits in 71 CRISPR screens"/>
</dbReference>
<dbReference type="PRO" id="PR:Q6AW46"/>
<dbReference type="Proteomes" id="UP000000589">
    <property type="component" value="Chromosome 8"/>
</dbReference>
<dbReference type="RNAct" id="Q6AW46">
    <property type="molecule type" value="protein"/>
</dbReference>
<dbReference type="Bgee" id="ENSMUSG00000058019">
    <property type="expression patterns" value="Expressed in lumbar dorsal root ganglion and 30 other cell types or tissues"/>
</dbReference>
<dbReference type="ExpressionAtlas" id="Q6AW46">
    <property type="expression patterns" value="baseline and differential"/>
</dbReference>
<dbReference type="GO" id="GO:0005576">
    <property type="term" value="C:extracellular region"/>
    <property type="evidence" value="ECO:0007669"/>
    <property type="project" value="UniProtKB-SubCell"/>
</dbReference>
<dbReference type="GO" id="GO:0106435">
    <property type="term" value="F:carboxylesterase activity"/>
    <property type="evidence" value="ECO:0007669"/>
    <property type="project" value="UniProtKB-EC"/>
</dbReference>
<dbReference type="CDD" id="cd00312">
    <property type="entry name" value="Esterase_lipase"/>
    <property type="match status" value="1"/>
</dbReference>
<dbReference type="FunFam" id="3.40.50.1820:FF:000011">
    <property type="entry name" value="Carboxylic ester hydrolase"/>
    <property type="match status" value="1"/>
</dbReference>
<dbReference type="Gene3D" id="3.40.50.1820">
    <property type="entry name" value="alpha/beta hydrolase"/>
    <property type="match status" value="1"/>
</dbReference>
<dbReference type="InterPro" id="IPR029058">
    <property type="entry name" value="AB_hydrolase_fold"/>
</dbReference>
<dbReference type="InterPro" id="IPR002018">
    <property type="entry name" value="CarbesteraseB"/>
</dbReference>
<dbReference type="InterPro" id="IPR019826">
    <property type="entry name" value="Carboxylesterase_B_AS"/>
</dbReference>
<dbReference type="InterPro" id="IPR019819">
    <property type="entry name" value="Carboxylesterase_B_CS"/>
</dbReference>
<dbReference type="InterPro" id="IPR050309">
    <property type="entry name" value="Type-B_Carboxylest/Lipase"/>
</dbReference>
<dbReference type="PANTHER" id="PTHR11559">
    <property type="entry name" value="CARBOXYLESTERASE"/>
    <property type="match status" value="1"/>
</dbReference>
<dbReference type="Pfam" id="PF00135">
    <property type="entry name" value="COesterase"/>
    <property type="match status" value="1"/>
</dbReference>
<dbReference type="SUPFAM" id="SSF53474">
    <property type="entry name" value="alpha/beta-Hydrolases"/>
    <property type="match status" value="1"/>
</dbReference>
<dbReference type="PROSITE" id="PS00122">
    <property type="entry name" value="CARBOXYLESTERASE_B_1"/>
    <property type="match status" value="1"/>
</dbReference>
<dbReference type="PROSITE" id="PS00941">
    <property type="entry name" value="CARBOXYLESTERASE_B_2"/>
    <property type="match status" value="1"/>
</dbReference>
<keyword id="KW-1015">Disulfide bond</keyword>
<keyword id="KW-0325">Glycoprotein</keyword>
<keyword id="KW-0378">Hydrolase</keyword>
<keyword id="KW-1185">Reference proteome</keyword>
<keyword id="KW-0964">Secreted</keyword>
<keyword id="KW-0719">Serine esterase</keyword>
<keyword id="KW-0732">Signal</keyword>
<comment type="function">
    <text evidence="1">Involved in the detoxification of xenobiotics and in the activation of ester and amide prodrugs.</text>
</comment>
<comment type="catalytic activity">
    <reaction evidence="3">
        <text>a carboxylic ester + H2O = an alcohol + a carboxylate + H(+)</text>
        <dbReference type="Rhea" id="RHEA:21164"/>
        <dbReference type="ChEBI" id="CHEBI:15377"/>
        <dbReference type="ChEBI" id="CHEBI:15378"/>
        <dbReference type="ChEBI" id="CHEBI:29067"/>
        <dbReference type="ChEBI" id="CHEBI:30879"/>
        <dbReference type="ChEBI" id="CHEBI:33308"/>
        <dbReference type="EC" id="3.1.1.1"/>
    </reaction>
</comment>
<comment type="subcellular location">
    <subcellularLocation>
        <location evidence="1">Secreted</location>
    </subcellularLocation>
</comment>
<comment type="PTM">
    <text evidence="1">N-glycosylated.</text>
</comment>
<comment type="similarity">
    <text evidence="4">Belongs to the type-B carboxylesterase/lipase family.</text>
</comment>
<feature type="signal peptide" evidence="2">
    <location>
        <begin position="1"/>
        <end position="28"/>
    </location>
</feature>
<feature type="chain" id="PRO_0000308592" description="Carboxylesterase 5A">
    <location>
        <begin position="29"/>
        <end position="575"/>
    </location>
</feature>
<feature type="active site" description="Acyl-ester intermediate" evidence="3">
    <location>
        <position position="226"/>
    </location>
</feature>
<feature type="active site" description="Charge relay system" evidence="1">
    <location>
        <position position="345"/>
    </location>
</feature>
<feature type="active site" description="Charge relay system" evidence="1">
    <location>
        <position position="454"/>
    </location>
</feature>
<feature type="glycosylation site" description="N-linked (GlcNAc...) asparagine" evidence="2">
    <location>
        <position position="134"/>
    </location>
</feature>
<feature type="glycosylation site" description="N-linked (GlcNAc...) asparagine" evidence="2">
    <location>
        <position position="281"/>
    </location>
</feature>
<feature type="glycosylation site" description="N-linked (GlcNAc...) asparagine" evidence="2">
    <location>
        <position position="363"/>
    </location>
</feature>
<feature type="glycosylation site" description="N-linked (GlcNAc...) asparagine" evidence="2">
    <location>
        <position position="524"/>
    </location>
</feature>
<feature type="disulfide bond" evidence="1">
    <location>
        <begin position="94"/>
        <end position="121"/>
    </location>
</feature>
<feature type="disulfide bond" evidence="1">
    <location>
        <begin position="280"/>
        <end position="291"/>
    </location>
</feature>